<dbReference type="EMBL" id="CP000438">
    <property type="protein sequence ID" value="ABJ14945.1"/>
    <property type="molecule type" value="Genomic_DNA"/>
</dbReference>
<dbReference type="RefSeq" id="WP_003100235.1">
    <property type="nucleotide sequence ID" value="NZ_CP034244.1"/>
</dbReference>
<dbReference type="SMR" id="Q02DF0"/>
<dbReference type="KEGG" id="pau:PA14_73290"/>
<dbReference type="PseudoCAP" id="PA14_73290"/>
<dbReference type="HOGENOM" id="CLU_079215_4_5_6"/>
<dbReference type="BioCyc" id="PAER208963:G1G74-6165-MONOMER"/>
<dbReference type="Proteomes" id="UP000000653">
    <property type="component" value="Chromosome"/>
</dbReference>
<dbReference type="GO" id="GO:0005886">
    <property type="term" value="C:plasma membrane"/>
    <property type="evidence" value="ECO:0007669"/>
    <property type="project" value="UniProtKB-SubCell"/>
</dbReference>
<dbReference type="GO" id="GO:0045259">
    <property type="term" value="C:proton-transporting ATP synthase complex"/>
    <property type="evidence" value="ECO:0007669"/>
    <property type="project" value="UniProtKB-KW"/>
</dbReference>
<dbReference type="GO" id="GO:0046933">
    <property type="term" value="F:proton-transporting ATP synthase activity, rotational mechanism"/>
    <property type="evidence" value="ECO:0007669"/>
    <property type="project" value="UniProtKB-UniRule"/>
</dbReference>
<dbReference type="GO" id="GO:0046961">
    <property type="term" value="F:proton-transporting ATPase activity, rotational mechanism"/>
    <property type="evidence" value="ECO:0007669"/>
    <property type="project" value="TreeGrafter"/>
</dbReference>
<dbReference type="CDD" id="cd06503">
    <property type="entry name" value="ATP-synt_Fo_b"/>
    <property type="match status" value="1"/>
</dbReference>
<dbReference type="FunFam" id="1.20.5.620:FF:000001">
    <property type="entry name" value="ATP synthase subunit b"/>
    <property type="match status" value="1"/>
</dbReference>
<dbReference type="Gene3D" id="1.20.5.620">
    <property type="entry name" value="F1F0 ATP synthase subunit B, membrane domain"/>
    <property type="match status" value="1"/>
</dbReference>
<dbReference type="HAMAP" id="MF_01398">
    <property type="entry name" value="ATP_synth_b_bprime"/>
    <property type="match status" value="1"/>
</dbReference>
<dbReference type="InterPro" id="IPR028987">
    <property type="entry name" value="ATP_synth_B-like_membr_sf"/>
</dbReference>
<dbReference type="InterPro" id="IPR002146">
    <property type="entry name" value="ATP_synth_b/b'su_bac/chlpt"/>
</dbReference>
<dbReference type="InterPro" id="IPR005864">
    <property type="entry name" value="ATP_synth_F0_bsu_bac"/>
</dbReference>
<dbReference type="InterPro" id="IPR050059">
    <property type="entry name" value="ATP_synthase_B_chain"/>
</dbReference>
<dbReference type="NCBIfam" id="TIGR01144">
    <property type="entry name" value="ATP_synt_b"/>
    <property type="match status" value="1"/>
</dbReference>
<dbReference type="NCBIfam" id="NF004411">
    <property type="entry name" value="PRK05759.1-2"/>
    <property type="match status" value="1"/>
</dbReference>
<dbReference type="NCBIfam" id="NF004413">
    <property type="entry name" value="PRK05759.1-4"/>
    <property type="match status" value="1"/>
</dbReference>
<dbReference type="PANTHER" id="PTHR33445:SF1">
    <property type="entry name" value="ATP SYNTHASE SUBUNIT B"/>
    <property type="match status" value="1"/>
</dbReference>
<dbReference type="PANTHER" id="PTHR33445">
    <property type="entry name" value="ATP SYNTHASE SUBUNIT B', CHLOROPLASTIC"/>
    <property type="match status" value="1"/>
</dbReference>
<dbReference type="Pfam" id="PF00430">
    <property type="entry name" value="ATP-synt_B"/>
    <property type="match status" value="1"/>
</dbReference>
<dbReference type="SUPFAM" id="SSF81573">
    <property type="entry name" value="F1F0 ATP synthase subunit B, membrane domain"/>
    <property type="match status" value="1"/>
</dbReference>
<sequence length="156" mass="16956">MNINATLIGQSVAFFIFVLFCMKFVWPPVIAALQERQKKIADGLDAANRAARDLELAHEKAGQQLREAKAQAAEIVEQAKKRANQIVDEARDQARTEGERLKAQAQAEIEQELNSVKDALRAQVGALAVTGAEKILGASIDANAHEQLVSKLAAEI</sequence>
<evidence type="ECO:0000255" key="1">
    <source>
        <dbReference type="HAMAP-Rule" id="MF_01398"/>
    </source>
</evidence>
<comment type="function">
    <text evidence="1">F(1)F(0) ATP synthase produces ATP from ADP in the presence of a proton or sodium gradient. F-type ATPases consist of two structural domains, F(1) containing the extramembraneous catalytic core and F(0) containing the membrane proton channel, linked together by a central stalk and a peripheral stalk. During catalysis, ATP synthesis in the catalytic domain of F(1) is coupled via a rotary mechanism of the central stalk subunits to proton translocation.</text>
</comment>
<comment type="function">
    <text evidence="1">Component of the F(0) channel, it forms part of the peripheral stalk, linking F(1) to F(0).</text>
</comment>
<comment type="subunit">
    <text evidence="1">F-type ATPases have 2 components, F(1) - the catalytic core - and F(0) - the membrane proton channel. F(1) has five subunits: alpha(3), beta(3), gamma(1), delta(1), epsilon(1). F(0) has three main subunits: a(1), b(2) and c(10-14). The alpha and beta chains form an alternating ring which encloses part of the gamma chain. F(1) is attached to F(0) by a central stalk formed by the gamma and epsilon chains, while a peripheral stalk is formed by the delta and b chains.</text>
</comment>
<comment type="subcellular location">
    <subcellularLocation>
        <location evidence="1">Cell inner membrane</location>
        <topology evidence="1">Single-pass membrane protein</topology>
    </subcellularLocation>
</comment>
<comment type="similarity">
    <text evidence="1">Belongs to the ATPase B chain family.</text>
</comment>
<name>ATPF_PSEAB</name>
<feature type="chain" id="PRO_0000368684" description="ATP synthase subunit b">
    <location>
        <begin position="1"/>
        <end position="156"/>
    </location>
</feature>
<feature type="transmembrane region" description="Helical" evidence="1">
    <location>
        <begin position="12"/>
        <end position="32"/>
    </location>
</feature>
<accession>Q02DF0</accession>
<protein>
    <recommendedName>
        <fullName evidence="1">ATP synthase subunit b</fullName>
    </recommendedName>
    <alternativeName>
        <fullName evidence="1">ATP synthase F(0) sector subunit b</fullName>
    </alternativeName>
    <alternativeName>
        <fullName evidence="1">ATPase subunit I</fullName>
    </alternativeName>
    <alternativeName>
        <fullName evidence="1">F-type ATPase subunit b</fullName>
        <shortName evidence="1">F-ATPase subunit b</shortName>
    </alternativeName>
</protein>
<gene>
    <name evidence="1" type="primary">atpF</name>
    <name type="ordered locus">PA14_73290</name>
</gene>
<keyword id="KW-0066">ATP synthesis</keyword>
<keyword id="KW-0997">Cell inner membrane</keyword>
<keyword id="KW-1003">Cell membrane</keyword>
<keyword id="KW-0138">CF(0)</keyword>
<keyword id="KW-0375">Hydrogen ion transport</keyword>
<keyword id="KW-0406">Ion transport</keyword>
<keyword id="KW-0472">Membrane</keyword>
<keyword id="KW-0812">Transmembrane</keyword>
<keyword id="KW-1133">Transmembrane helix</keyword>
<keyword id="KW-0813">Transport</keyword>
<proteinExistence type="inferred from homology"/>
<organism>
    <name type="scientific">Pseudomonas aeruginosa (strain UCBPP-PA14)</name>
    <dbReference type="NCBI Taxonomy" id="208963"/>
    <lineage>
        <taxon>Bacteria</taxon>
        <taxon>Pseudomonadati</taxon>
        <taxon>Pseudomonadota</taxon>
        <taxon>Gammaproteobacteria</taxon>
        <taxon>Pseudomonadales</taxon>
        <taxon>Pseudomonadaceae</taxon>
        <taxon>Pseudomonas</taxon>
    </lineage>
</organism>
<reference key="1">
    <citation type="journal article" date="2006" name="Genome Biol.">
        <title>Genomic analysis reveals that Pseudomonas aeruginosa virulence is combinatorial.</title>
        <authorList>
            <person name="Lee D.G."/>
            <person name="Urbach J.M."/>
            <person name="Wu G."/>
            <person name="Liberati N.T."/>
            <person name="Feinbaum R.L."/>
            <person name="Miyata S."/>
            <person name="Diggins L.T."/>
            <person name="He J."/>
            <person name="Saucier M."/>
            <person name="Deziel E."/>
            <person name="Friedman L."/>
            <person name="Li L."/>
            <person name="Grills G."/>
            <person name="Montgomery K."/>
            <person name="Kucherlapati R."/>
            <person name="Rahme L.G."/>
            <person name="Ausubel F.M."/>
        </authorList>
    </citation>
    <scope>NUCLEOTIDE SEQUENCE [LARGE SCALE GENOMIC DNA]</scope>
    <source>
        <strain>UCBPP-PA14</strain>
    </source>
</reference>